<evidence type="ECO:0000250" key="1"/>
<evidence type="ECO:0000305" key="2"/>
<protein>
    <recommendedName>
        <fullName>Vacuolar protein-sorting-associated protein 25</fullName>
    </recommendedName>
    <alternativeName>
        <fullName>ESCRT-II complex subunit VPS25</fullName>
    </alternativeName>
</protein>
<keyword id="KW-0963">Cytoplasm</keyword>
<keyword id="KW-0653">Protein transport</keyword>
<keyword id="KW-1185">Reference proteome</keyword>
<keyword id="KW-0813">Transport</keyword>
<dbReference type="EMBL" id="BC079766">
    <property type="protein sequence ID" value="AAH79766.1"/>
    <property type="molecule type" value="mRNA"/>
</dbReference>
<dbReference type="RefSeq" id="NP_001087424.1">
    <property type="nucleotide sequence ID" value="NM_001093955.1"/>
</dbReference>
<dbReference type="SMR" id="Q6AX45"/>
<dbReference type="DNASU" id="447248"/>
<dbReference type="GeneID" id="447248"/>
<dbReference type="KEGG" id="xla:447248"/>
<dbReference type="AGR" id="Xenbase:XB-GENE-976405"/>
<dbReference type="CTD" id="447248"/>
<dbReference type="Xenbase" id="XB-GENE-976405">
    <property type="gene designation" value="vps25.L"/>
</dbReference>
<dbReference type="OMA" id="TRCLIMW"/>
<dbReference type="OrthoDB" id="245150at2759"/>
<dbReference type="Proteomes" id="UP000186698">
    <property type="component" value="Chromosome 9_10L"/>
</dbReference>
<dbReference type="Bgee" id="447248">
    <property type="expression patterns" value="Expressed in zone of skin and 19 other cell types or tissues"/>
</dbReference>
<dbReference type="GO" id="GO:0000814">
    <property type="term" value="C:ESCRT II complex"/>
    <property type="evidence" value="ECO:0000318"/>
    <property type="project" value="GO_Central"/>
</dbReference>
<dbReference type="GO" id="GO:0042803">
    <property type="term" value="F:protein homodimerization activity"/>
    <property type="evidence" value="ECO:0000318"/>
    <property type="project" value="GO_Central"/>
</dbReference>
<dbReference type="GO" id="GO:0005198">
    <property type="term" value="F:structural molecule activity"/>
    <property type="evidence" value="ECO:0000318"/>
    <property type="project" value="GO_Central"/>
</dbReference>
<dbReference type="GO" id="GO:0043328">
    <property type="term" value="P:protein transport to vacuole involved in ubiquitin-dependent protein catabolic process via the multivesicular body sorting pathway"/>
    <property type="evidence" value="ECO:0000318"/>
    <property type="project" value="GO_Central"/>
</dbReference>
<dbReference type="FunFam" id="1.10.10.10:FF:000141">
    <property type="entry name" value="vacuolar protein-sorting-associated protein 25"/>
    <property type="match status" value="1"/>
</dbReference>
<dbReference type="FunFam" id="1.10.10.570:FF:000001">
    <property type="entry name" value="vacuolar protein-sorting-associated protein 25"/>
    <property type="match status" value="1"/>
</dbReference>
<dbReference type="Gene3D" id="1.10.10.570">
    <property type="entry name" value="Winged helix' DNA-binding domain. Chain C. Domain 1"/>
    <property type="match status" value="1"/>
</dbReference>
<dbReference type="Gene3D" id="1.10.10.10">
    <property type="entry name" value="Winged helix-like DNA-binding domain superfamily/Winged helix DNA-binding domain"/>
    <property type="match status" value="1"/>
</dbReference>
<dbReference type="InterPro" id="IPR008570">
    <property type="entry name" value="ESCRT-II_cplx_Vps25-sub"/>
</dbReference>
<dbReference type="InterPro" id="IPR014041">
    <property type="entry name" value="ESCRT-II_cplx_Vps25-sub_N"/>
</dbReference>
<dbReference type="InterPro" id="IPR036388">
    <property type="entry name" value="WH-like_DNA-bd_sf"/>
</dbReference>
<dbReference type="InterPro" id="IPR036390">
    <property type="entry name" value="WH_DNA-bd_sf"/>
</dbReference>
<dbReference type="PANTHER" id="PTHR13149">
    <property type="entry name" value="VACUOLAR PROTEIN SORTING-ASSOCIATED PROTEIN VPS25"/>
    <property type="match status" value="1"/>
</dbReference>
<dbReference type="PANTHER" id="PTHR13149:SF0">
    <property type="entry name" value="VACUOLAR PROTEIN-SORTING-ASSOCIATED PROTEIN 25"/>
    <property type="match status" value="1"/>
</dbReference>
<dbReference type="Pfam" id="PF05871">
    <property type="entry name" value="ESCRT-II"/>
    <property type="match status" value="1"/>
</dbReference>
<dbReference type="SUPFAM" id="SSF46785">
    <property type="entry name" value="Winged helix' DNA-binding domain"/>
    <property type="match status" value="2"/>
</dbReference>
<comment type="function">
    <text evidence="1">Component of the ESCRT-II complex (endosomal sorting complex required for transport II), which is required for multivesicular body (MVB) formation and sorting of endosomal cargo proteins into MVBs. The MVB pathway mediates delivery of transmembrane proteins into the lumen of the lysosome for degradation. The ESCRT-II complex is probably involved in the recruitment of the ESCRT-III complex (By similarity).</text>
</comment>
<comment type="subunit">
    <text evidence="1">Component of the endosomal sorting complex required for transport II (ESCRT-II), composed of SNF8, VPS36 and 2 copies of VPS25.</text>
</comment>
<comment type="subcellular location">
    <subcellularLocation>
        <location evidence="1">Cytoplasm</location>
    </subcellularLocation>
</comment>
<comment type="similarity">
    <text evidence="2">Belongs to the VPS25 family.</text>
</comment>
<gene>
    <name type="primary">vps25</name>
</gene>
<proteinExistence type="evidence at transcript level"/>
<feature type="chain" id="PRO_0000215220" description="Vacuolar protein-sorting-associated protein 25">
    <location>
        <begin position="1"/>
        <end position="174"/>
    </location>
</feature>
<reference key="1">
    <citation type="submission" date="2004-08" db="EMBL/GenBank/DDBJ databases">
        <authorList>
            <consortium name="NIH - Xenopus Gene Collection (XGC) project"/>
        </authorList>
    </citation>
    <scope>NUCLEOTIDE SEQUENCE [LARGE SCALE MRNA]</scope>
    <source>
        <tissue>Eye</tissue>
    </source>
</reference>
<organism>
    <name type="scientific">Xenopus laevis</name>
    <name type="common">African clawed frog</name>
    <dbReference type="NCBI Taxonomy" id="8355"/>
    <lineage>
        <taxon>Eukaryota</taxon>
        <taxon>Metazoa</taxon>
        <taxon>Chordata</taxon>
        <taxon>Craniata</taxon>
        <taxon>Vertebrata</taxon>
        <taxon>Euteleostomi</taxon>
        <taxon>Amphibia</taxon>
        <taxon>Batrachia</taxon>
        <taxon>Anura</taxon>
        <taxon>Pipoidea</taxon>
        <taxon>Pipidae</taxon>
        <taxon>Xenopodinae</taxon>
        <taxon>Xenopus</taxon>
        <taxon>Xenopus</taxon>
    </lineage>
</organism>
<accession>Q6AX45</accession>
<name>VPS25_XENLA</name>
<sequence>MGFEWPWQYNFPPFFTLQPNVDTRQKQLSAWSSLVLSYCRQNKLYTMNLMEIQESPLFNNKKIQRKLSLESVQVVLEELRKKGNLEWIDKNKSRFLIMWRRPDEWGKVIYQWVSKNGMTNSVFTLYELISGDDTEGEEFHGLDEAMLLRSLEALQQEHKAEIITLNESRGVKFF</sequence>